<comment type="function">
    <text evidence="1">May interact with target proteins during translocation into the lumen of the endoplasmic reticulum. May protect unfolded target proteins against degradation and facilitate correct glycosylation (By similarity).</text>
</comment>
<comment type="subcellular location">
    <subcellularLocation>
        <location>Membrane</location>
        <topology>Single-pass type IV membrane protein</topology>
    </subcellularLocation>
    <subcellularLocation>
        <location evidence="4">Endoplasmic reticulum membrane</location>
        <topology evidence="4">Single-pass membrane protein</topology>
        <orientation evidence="4">Cytoplasmic side</orientation>
    </subcellularLocation>
</comment>
<comment type="similarity">
    <text evidence="4">Belongs to the RAMP4 family.</text>
</comment>
<proteinExistence type="evidence at transcript level"/>
<name>SERP_DICDI</name>
<gene>
    <name type="primary">serp</name>
    <name type="ORF">DDB_G0275381</name>
</gene>
<evidence type="ECO:0000250" key="1"/>
<evidence type="ECO:0000255" key="2"/>
<evidence type="ECO:0000256" key="3">
    <source>
        <dbReference type="SAM" id="MobiDB-lite"/>
    </source>
</evidence>
<evidence type="ECO:0000305" key="4"/>
<reference key="1">
    <citation type="journal article" date="2002" name="Nature">
        <title>Sequence and analysis of chromosome 2 of Dictyostelium discoideum.</title>
        <authorList>
            <person name="Gloeckner G."/>
            <person name="Eichinger L."/>
            <person name="Szafranski K."/>
            <person name="Pachebat J.A."/>
            <person name="Bankier A.T."/>
            <person name="Dear P.H."/>
            <person name="Lehmann R."/>
            <person name="Baumgart C."/>
            <person name="Parra G."/>
            <person name="Abril J.F."/>
            <person name="Guigo R."/>
            <person name="Kumpf K."/>
            <person name="Tunggal B."/>
            <person name="Cox E.C."/>
            <person name="Quail M.A."/>
            <person name="Platzer M."/>
            <person name="Rosenthal A."/>
            <person name="Noegel A.A."/>
        </authorList>
    </citation>
    <scope>NUCLEOTIDE SEQUENCE [LARGE SCALE GENOMIC DNA]</scope>
    <source>
        <strain>AX4</strain>
    </source>
</reference>
<reference key="2">
    <citation type="journal article" date="2005" name="Nature">
        <title>The genome of the social amoeba Dictyostelium discoideum.</title>
        <authorList>
            <person name="Eichinger L."/>
            <person name="Pachebat J.A."/>
            <person name="Gloeckner G."/>
            <person name="Rajandream M.A."/>
            <person name="Sucgang R."/>
            <person name="Berriman M."/>
            <person name="Song J."/>
            <person name="Olsen R."/>
            <person name="Szafranski K."/>
            <person name="Xu Q."/>
            <person name="Tunggal B."/>
            <person name="Kummerfeld S."/>
            <person name="Madera M."/>
            <person name="Konfortov B.A."/>
            <person name="Rivero F."/>
            <person name="Bankier A.T."/>
            <person name="Lehmann R."/>
            <person name="Hamlin N."/>
            <person name="Davies R."/>
            <person name="Gaudet P."/>
            <person name="Fey P."/>
            <person name="Pilcher K."/>
            <person name="Chen G."/>
            <person name="Saunders D."/>
            <person name="Sodergren E.J."/>
            <person name="Davis P."/>
            <person name="Kerhornou A."/>
            <person name="Nie X."/>
            <person name="Hall N."/>
            <person name="Anjard C."/>
            <person name="Hemphill L."/>
            <person name="Bason N."/>
            <person name="Farbrother P."/>
            <person name="Desany B."/>
            <person name="Just E."/>
            <person name="Morio T."/>
            <person name="Rost R."/>
            <person name="Churcher C.M."/>
            <person name="Cooper J."/>
            <person name="Haydock S."/>
            <person name="van Driessche N."/>
            <person name="Cronin A."/>
            <person name="Goodhead I."/>
            <person name="Muzny D.M."/>
            <person name="Mourier T."/>
            <person name="Pain A."/>
            <person name="Lu M."/>
            <person name="Harper D."/>
            <person name="Lindsay R."/>
            <person name="Hauser H."/>
            <person name="James K.D."/>
            <person name="Quiles M."/>
            <person name="Madan Babu M."/>
            <person name="Saito T."/>
            <person name="Buchrieser C."/>
            <person name="Wardroper A."/>
            <person name="Felder M."/>
            <person name="Thangavelu M."/>
            <person name="Johnson D."/>
            <person name="Knights A."/>
            <person name="Loulseged H."/>
            <person name="Mungall K.L."/>
            <person name="Oliver K."/>
            <person name="Price C."/>
            <person name="Quail M.A."/>
            <person name="Urushihara H."/>
            <person name="Hernandez J."/>
            <person name="Rabbinowitsch E."/>
            <person name="Steffen D."/>
            <person name="Sanders M."/>
            <person name="Ma J."/>
            <person name="Kohara Y."/>
            <person name="Sharp S."/>
            <person name="Simmonds M.N."/>
            <person name="Spiegler S."/>
            <person name="Tivey A."/>
            <person name="Sugano S."/>
            <person name="White B."/>
            <person name="Walker D."/>
            <person name="Woodward J.R."/>
            <person name="Winckler T."/>
            <person name="Tanaka Y."/>
            <person name="Shaulsky G."/>
            <person name="Schleicher M."/>
            <person name="Weinstock G.M."/>
            <person name="Rosenthal A."/>
            <person name="Cox E.C."/>
            <person name="Chisholm R.L."/>
            <person name="Gibbs R.A."/>
            <person name="Loomis W.F."/>
            <person name="Platzer M."/>
            <person name="Kay R.R."/>
            <person name="Williams J.G."/>
            <person name="Dear P.H."/>
            <person name="Noegel A.A."/>
            <person name="Barrell B.G."/>
            <person name="Kuspa A."/>
        </authorList>
    </citation>
    <scope>NUCLEOTIDE SEQUENCE [LARGE SCALE GENOMIC DNA]</scope>
    <source>
        <strain>AX4</strain>
    </source>
</reference>
<accession>Q553P6</accession>
<keyword id="KW-0256">Endoplasmic reticulum</keyword>
<keyword id="KW-0472">Membrane</keyword>
<keyword id="KW-0653">Protein transport</keyword>
<keyword id="KW-1185">Reference proteome</keyword>
<keyword id="KW-0811">Translocation</keyword>
<keyword id="KW-0812">Transmembrane</keyword>
<keyword id="KW-1133">Transmembrane helix</keyword>
<keyword id="KW-0813">Transport</keyword>
<dbReference type="EMBL" id="AAFI02000013">
    <property type="protein sequence ID" value="EAL69756.1"/>
    <property type="molecule type" value="Genomic_DNA"/>
</dbReference>
<dbReference type="RefSeq" id="XP_643700.1">
    <property type="nucleotide sequence ID" value="XM_638608.1"/>
</dbReference>
<dbReference type="SMR" id="Q553P6"/>
<dbReference type="FunCoup" id="Q553P6">
    <property type="interactions" value="80"/>
</dbReference>
<dbReference type="STRING" id="44689.Q553P6"/>
<dbReference type="PaxDb" id="44689-DDB0202595"/>
<dbReference type="EnsemblProtists" id="EAL69756">
    <property type="protein sequence ID" value="EAL69756"/>
    <property type="gene ID" value="DDB_G0275381"/>
</dbReference>
<dbReference type="GeneID" id="8619969"/>
<dbReference type="KEGG" id="ddi:DDB_G0275381"/>
<dbReference type="dictyBase" id="DDB_G0275381"/>
<dbReference type="VEuPathDB" id="AmoebaDB:DDB_G0275381"/>
<dbReference type="eggNOG" id="ENOG502S9SE">
    <property type="taxonomic scope" value="Eukaryota"/>
</dbReference>
<dbReference type="HOGENOM" id="CLU_160944_3_0_1"/>
<dbReference type="InParanoid" id="Q553P6"/>
<dbReference type="OMA" id="TEKYHNN"/>
<dbReference type="PhylomeDB" id="Q553P6"/>
<dbReference type="Reactome" id="R-DDI-9609523">
    <property type="pathway name" value="Insertion of tail-anchored proteins into the endoplasmic reticulum membrane"/>
</dbReference>
<dbReference type="PRO" id="PR:Q553P6"/>
<dbReference type="Proteomes" id="UP000002195">
    <property type="component" value="Chromosome 2"/>
</dbReference>
<dbReference type="GO" id="GO:0005783">
    <property type="term" value="C:endoplasmic reticulum"/>
    <property type="evidence" value="ECO:0000318"/>
    <property type="project" value="GO_Central"/>
</dbReference>
<dbReference type="GO" id="GO:0005789">
    <property type="term" value="C:endoplasmic reticulum membrane"/>
    <property type="evidence" value="ECO:0007669"/>
    <property type="project" value="UniProtKB-SubCell"/>
</dbReference>
<dbReference type="GO" id="GO:0030968">
    <property type="term" value="P:endoplasmic reticulum unfolded protein response"/>
    <property type="evidence" value="ECO:0000318"/>
    <property type="project" value="GO_Central"/>
</dbReference>
<dbReference type="GO" id="GO:0015031">
    <property type="term" value="P:protein transport"/>
    <property type="evidence" value="ECO:0007669"/>
    <property type="project" value="UniProtKB-KW"/>
</dbReference>
<dbReference type="InterPro" id="IPR010580">
    <property type="entry name" value="ER_stress-assoc"/>
</dbReference>
<dbReference type="PANTHER" id="PTHR15601:SF0">
    <property type="entry name" value="GEO09675P1"/>
    <property type="match status" value="1"/>
</dbReference>
<dbReference type="PANTHER" id="PTHR15601">
    <property type="entry name" value="STRESS ASSOCIATED ENDOPLASMIC RETICULUM PROTEIN SERP1/RAMP4"/>
    <property type="match status" value="1"/>
</dbReference>
<dbReference type="Pfam" id="PF06624">
    <property type="entry name" value="RAMP4"/>
    <property type="match status" value="1"/>
</dbReference>
<feature type="chain" id="PRO_0000330932" description="Probable stress-associated endoplasmic reticulum protein">
    <location>
        <begin position="1"/>
        <end position="59"/>
    </location>
</feature>
<feature type="topological domain" description="Cytoplasmic" evidence="2">
    <location>
        <begin position="1"/>
        <end position="34"/>
    </location>
</feature>
<feature type="transmembrane region" description="Helical; Anchor for type IV membrane protein" evidence="2">
    <location>
        <begin position="35"/>
        <end position="55"/>
    </location>
</feature>
<feature type="topological domain" description="Extracellular" evidence="2">
    <location>
        <begin position="56"/>
        <end position="59"/>
    </location>
</feature>
<feature type="region of interest" description="Disordered" evidence="3">
    <location>
        <begin position="1"/>
        <end position="30"/>
    </location>
</feature>
<feature type="compositionally biased region" description="Basic and acidic residues" evidence="3">
    <location>
        <begin position="16"/>
        <end position="30"/>
    </location>
</feature>
<organism>
    <name type="scientific">Dictyostelium discoideum</name>
    <name type="common">Social amoeba</name>
    <dbReference type="NCBI Taxonomy" id="44689"/>
    <lineage>
        <taxon>Eukaryota</taxon>
        <taxon>Amoebozoa</taxon>
        <taxon>Evosea</taxon>
        <taxon>Eumycetozoa</taxon>
        <taxon>Dictyostelia</taxon>
        <taxon>Dictyosteliales</taxon>
        <taxon>Dictyosteliaceae</taxon>
        <taxon>Dictyostelium</taxon>
    </lineage>
</organism>
<sequence>MSQSRTLRQKSQKYQENIEKRGVASPKKKEDGLNINPYVLGFIIFVVVGSTLLQILKGQ</sequence>
<protein>
    <recommendedName>
        <fullName>Probable stress-associated endoplasmic reticulum protein</fullName>
    </recommendedName>
    <alternativeName>
        <fullName>Ribosome-attached membrane protein 4 homolog</fullName>
    </alternativeName>
</protein>